<protein>
    <recommendedName>
        <fullName evidence="1">Zinc import ATP-binding protein ZnuC</fullName>
        <ecNumber evidence="1">7.2.2.20</ecNumber>
    </recommendedName>
</protein>
<comment type="function">
    <text evidence="1">Part of the ABC transporter complex ZnuABC involved in zinc import. Responsible for energy coupling to the transport system.</text>
</comment>
<comment type="catalytic activity">
    <reaction evidence="1">
        <text>Zn(2+)(out) + ATP(in) + H2O(in) = Zn(2+)(in) + ADP(in) + phosphate(in) + H(+)(in)</text>
        <dbReference type="Rhea" id="RHEA:29795"/>
        <dbReference type="ChEBI" id="CHEBI:15377"/>
        <dbReference type="ChEBI" id="CHEBI:15378"/>
        <dbReference type="ChEBI" id="CHEBI:29105"/>
        <dbReference type="ChEBI" id="CHEBI:30616"/>
        <dbReference type="ChEBI" id="CHEBI:43474"/>
        <dbReference type="ChEBI" id="CHEBI:456216"/>
        <dbReference type="EC" id="7.2.2.20"/>
    </reaction>
</comment>
<comment type="subunit">
    <text evidence="1">The complex is composed of two ATP-binding proteins (ZnuC), two transmembrane proteins (ZnuB) and a solute-binding protein (ZnuA).</text>
</comment>
<comment type="subcellular location">
    <subcellularLocation>
        <location evidence="1">Cell inner membrane</location>
        <topology evidence="1">Peripheral membrane protein</topology>
    </subcellularLocation>
</comment>
<comment type="similarity">
    <text evidence="1">Belongs to the ABC transporter superfamily. Zinc importer (TC 3.A.1.15.5) family.</text>
</comment>
<organism>
    <name type="scientific">Buchnera aphidicola subsp. Acyrthosiphon pisum (strain APS)</name>
    <name type="common">Acyrthosiphon pisum symbiotic bacterium</name>
    <dbReference type="NCBI Taxonomy" id="107806"/>
    <lineage>
        <taxon>Bacteria</taxon>
        <taxon>Pseudomonadati</taxon>
        <taxon>Pseudomonadota</taxon>
        <taxon>Gammaproteobacteria</taxon>
        <taxon>Enterobacterales</taxon>
        <taxon>Erwiniaceae</taxon>
        <taxon>Buchnera</taxon>
    </lineage>
</organism>
<feature type="chain" id="PRO_0000093127" description="Zinc import ATP-binding protein ZnuC">
    <location>
        <begin position="1"/>
        <end position="238"/>
    </location>
</feature>
<feature type="domain" description="ABC transporter" evidence="1">
    <location>
        <begin position="5"/>
        <end position="220"/>
    </location>
</feature>
<feature type="binding site" evidence="1">
    <location>
        <begin position="37"/>
        <end position="44"/>
    </location>
    <ligand>
        <name>ATP</name>
        <dbReference type="ChEBI" id="CHEBI:30616"/>
    </ligand>
</feature>
<keyword id="KW-0067">ATP-binding</keyword>
<keyword id="KW-0997">Cell inner membrane</keyword>
<keyword id="KW-1003">Cell membrane</keyword>
<keyword id="KW-0406">Ion transport</keyword>
<keyword id="KW-0472">Membrane</keyword>
<keyword id="KW-0547">Nucleotide-binding</keyword>
<keyword id="KW-1185">Reference proteome</keyword>
<keyword id="KW-1278">Translocase</keyword>
<keyword id="KW-0813">Transport</keyword>
<keyword id="KW-0862">Zinc</keyword>
<keyword id="KW-0864">Zinc transport</keyword>
<accession>P57403</accession>
<gene>
    <name evidence="1" type="primary">znuC</name>
    <name type="ordered locus">BU318</name>
</gene>
<evidence type="ECO:0000255" key="1">
    <source>
        <dbReference type="HAMAP-Rule" id="MF_01725"/>
    </source>
</evidence>
<sequence>MFEFVKLKNVCVNLSHRSILTDISLSLISNRVLTLIGPNGAGKSTLVRIILGLIKPNSGTIIRSNNLSVGYVPQKLHLNTLLPITVERFMKLSRKTNNIKIEEMLKRVKAESLKFCQLQKLSGGEMQRILFAKALLNNPNLLVLDEPTQGVDVMGQLALYKLINEIRHELQCAILIVSHDLNFVMAKTDDVICLNNHICCSGTPETVCNNLEFISIFGLKRVQELAIYHHNHNHIHNF</sequence>
<reference key="1">
    <citation type="journal article" date="2000" name="Nature">
        <title>Genome sequence of the endocellular bacterial symbiont of aphids Buchnera sp. APS.</title>
        <authorList>
            <person name="Shigenobu S."/>
            <person name="Watanabe H."/>
            <person name="Hattori M."/>
            <person name="Sakaki Y."/>
            <person name="Ishikawa H."/>
        </authorList>
    </citation>
    <scope>NUCLEOTIDE SEQUENCE [LARGE SCALE GENOMIC DNA]</scope>
    <source>
        <strain>APS</strain>
    </source>
</reference>
<name>ZNUC_BUCAI</name>
<dbReference type="EC" id="7.2.2.20" evidence="1"/>
<dbReference type="EMBL" id="BA000003">
    <property type="protein sequence ID" value="BAB13026.1"/>
    <property type="molecule type" value="Genomic_DNA"/>
</dbReference>
<dbReference type="RefSeq" id="NP_240140.1">
    <property type="nucleotide sequence ID" value="NC_002528.1"/>
</dbReference>
<dbReference type="RefSeq" id="WP_009874272.1">
    <property type="nucleotide sequence ID" value="NZ_AP036055.1"/>
</dbReference>
<dbReference type="SMR" id="P57403"/>
<dbReference type="STRING" id="563178.BUAP5A_311"/>
<dbReference type="EnsemblBacteria" id="BAB13026">
    <property type="protein sequence ID" value="BAB13026"/>
    <property type="gene ID" value="BAB13026"/>
</dbReference>
<dbReference type="KEGG" id="buc:BU318"/>
<dbReference type="PATRIC" id="fig|107806.10.peg.330"/>
<dbReference type="eggNOG" id="COG1121">
    <property type="taxonomic scope" value="Bacteria"/>
</dbReference>
<dbReference type="HOGENOM" id="CLU_000604_1_11_6"/>
<dbReference type="Proteomes" id="UP000001806">
    <property type="component" value="Chromosome"/>
</dbReference>
<dbReference type="GO" id="GO:0005886">
    <property type="term" value="C:plasma membrane"/>
    <property type="evidence" value="ECO:0007669"/>
    <property type="project" value="UniProtKB-SubCell"/>
</dbReference>
<dbReference type="GO" id="GO:0015633">
    <property type="term" value="F:ABC-type zinc transporter activity"/>
    <property type="evidence" value="ECO:0007669"/>
    <property type="project" value="UniProtKB-EC"/>
</dbReference>
<dbReference type="GO" id="GO:0005524">
    <property type="term" value="F:ATP binding"/>
    <property type="evidence" value="ECO:0007669"/>
    <property type="project" value="UniProtKB-KW"/>
</dbReference>
<dbReference type="GO" id="GO:0016887">
    <property type="term" value="F:ATP hydrolysis activity"/>
    <property type="evidence" value="ECO:0007669"/>
    <property type="project" value="InterPro"/>
</dbReference>
<dbReference type="GO" id="GO:0010043">
    <property type="term" value="P:response to zinc ion"/>
    <property type="evidence" value="ECO:0007669"/>
    <property type="project" value="TreeGrafter"/>
</dbReference>
<dbReference type="FunFam" id="3.40.50.300:FF:000392">
    <property type="entry name" value="Zinc import ATP-binding protein ZnuC"/>
    <property type="match status" value="1"/>
</dbReference>
<dbReference type="Gene3D" id="3.40.50.300">
    <property type="entry name" value="P-loop containing nucleotide triphosphate hydrolases"/>
    <property type="match status" value="1"/>
</dbReference>
<dbReference type="InterPro" id="IPR003593">
    <property type="entry name" value="AAA+_ATPase"/>
</dbReference>
<dbReference type="InterPro" id="IPR003439">
    <property type="entry name" value="ABC_transporter-like_ATP-bd"/>
</dbReference>
<dbReference type="InterPro" id="IPR017871">
    <property type="entry name" value="ABC_transporter-like_CS"/>
</dbReference>
<dbReference type="InterPro" id="IPR050153">
    <property type="entry name" value="Metal_Ion_Import_ABC"/>
</dbReference>
<dbReference type="InterPro" id="IPR027417">
    <property type="entry name" value="P-loop_NTPase"/>
</dbReference>
<dbReference type="NCBIfam" id="NF007090">
    <property type="entry name" value="PRK09544.1"/>
    <property type="match status" value="1"/>
</dbReference>
<dbReference type="PANTHER" id="PTHR42734">
    <property type="entry name" value="METAL TRANSPORT SYSTEM ATP-BINDING PROTEIN TM_0124-RELATED"/>
    <property type="match status" value="1"/>
</dbReference>
<dbReference type="PANTHER" id="PTHR42734:SF9">
    <property type="entry name" value="ZINC IMPORT ATP-BINDING PROTEIN ZNUC"/>
    <property type="match status" value="1"/>
</dbReference>
<dbReference type="Pfam" id="PF00005">
    <property type="entry name" value="ABC_tran"/>
    <property type="match status" value="1"/>
</dbReference>
<dbReference type="SMART" id="SM00382">
    <property type="entry name" value="AAA"/>
    <property type="match status" value="1"/>
</dbReference>
<dbReference type="SUPFAM" id="SSF52540">
    <property type="entry name" value="P-loop containing nucleoside triphosphate hydrolases"/>
    <property type="match status" value="1"/>
</dbReference>
<dbReference type="PROSITE" id="PS00211">
    <property type="entry name" value="ABC_TRANSPORTER_1"/>
    <property type="match status" value="1"/>
</dbReference>
<dbReference type="PROSITE" id="PS50893">
    <property type="entry name" value="ABC_TRANSPORTER_2"/>
    <property type="match status" value="1"/>
</dbReference>
<dbReference type="PROSITE" id="PS51298">
    <property type="entry name" value="ZNUC"/>
    <property type="match status" value="1"/>
</dbReference>
<proteinExistence type="inferred from homology"/>